<proteinExistence type="evidence at protein level"/>
<feature type="chain" id="PRO_0000220634" description="C-Jun-amino-terminal kinase-interacting protein 3">
    <location>
        <begin position="1"/>
        <end position="1337"/>
    </location>
</feature>
<feature type="domain" description="RH1" evidence="4">
    <location>
        <begin position="12"/>
        <end position="100"/>
    </location>
</feature>
<feature type="domain" description="RH2" evidence="5">
    <location>
        <begin position="521"/>
        <end position="595"/>
    </location>
</feature>
<feature type="region of interest" description="Kinesin-binding domain (KBD); essential for its function in axon elongation" evidence="13">
    <location>
        <begin position="50"/>
        <end position="80"/>
    </location>
</feature>
<feature type="region of interest" description="Disordered" evidence="6">
    <location>
        <begin position="183"/>
        <end position="211"/>
    </location>
</feature>
<feature type="region of interest" description="JNK-binding domain (JBD); essential for its function in axon elongation" evidence="13">
    <location>
        <begin position="210"/>
        <end position="226"/>
    </location>
</feature>
<feature type="region of interest" description="Disordered" evidence="6">
    <location>
        <begin position="245"/>
        <end position="285"/>
    </location>
</feature>
<feature type="region of interest" description="Leucine zipper-like domain (LZ); essential for its function in axon elongation" evidence="13">
    <location>
        <begin position="424"/>
        <end position="459"/>
    </location>
</feature>
<feature type="region of interest" description="Interaction with NTRK2" evidence="12">
    <location>
        <begin position="459"/>
        <end position="515"/>
    </location>
</feature>
<feature type="region of interest" description="Disordered" evidence="6">
    <location>
        <begin position="633"/>
        <end position="655"/>
    </location>
</feature>
<feature type="region of interest" description="Disordered" evidence="6">
    <location>
        <begin position="719"/>
        <end position="772"/>
    </location>
</feature>
<feature type="region of interest" description="Disordered" evidence="6">
    <location>
        <begin position="859"/>
        <end position="966"/>
    </location>
</feature>
<feature type="coiled-coil region" evidence="3">
    <location>
        <begin position="58"/>
        <end position="177"/>
    </location>
</feature>
<feature type="coiled-coil region" evidence="3">
    <location>
        <begin position="437"/>
        <end position="555"/>
    </location>
</feature>
<feature type="compositionally biased region" description="Polar residues" evidence="6">
    <location>
        <begin position="184"/>
        <end position="198"/>
    </location>
</feature>
<feature type="compositionally biased region" description="Low complexity" evidence="6">
    <location>
        <begin position="261"/>
        <end position="270"/>
    </location>
</feature>
<feature type="compositionally biased region" description="Polar residues" evidence="6">
    <location>
        <begin position="271"/>
        <end position="282"/>
    </location>
</feature>
<feature type="compositionally biased region" description="Basic and acidic residues" evidence="6">
    <location>
        <begin position="639"/>
        <end position="655"/>
    </location>
</feature>
<feature type="compositionally biased region" description="Basic and acidic residues" evidence="6">
    <location>
        <begin position="739"/>
        <end position="765"/>
    </location>
</feature>
<feature type="compositionally biased region" description="Polar residues" evidence="6">
    <location>
        <begin position="879"/>
        <end position="892"/>
    </location>
</feature>
<feature type="compositionally biased region" description="Polar residues" evidence="6">
    <location>
        <begin position="941"/>
        <end position="952"/>
    </location>
</feature>
<feature type="modified residue" description="Phosphothreonine; by MAPK" evidence="8">
    <location>
        <position position="266"/>
    </location>
</feature>
<feature type="modified residue" description="Phosphothreonine; by MAPK" evidence="8">
    <location>
        <position position="276"/>
    </location>
</feature>
<feature type="modified residue" description="Phosphothreonine; by MAPK" evidence="8 21">
    <location>
        <position position="287"/>
    </location>
</feature>
<feature type="modified residue" description="Phosphoserine; by ROCK1" evidence="2">
    <location>
        <position position="315"/>
    </location>
</feature>
<feature type="modified residue" description="Phosphoserine; by ROCK1" evidence="2">
    <location>
        <position position="365"/>
    </location>
</feature>
<feature type="modified residue" description="Phosphoserine" evidence="21">
    <location>
        <position position="366"/>
    </location>
</feature>
<feature type="modified residue" description="Phosphoserine" evidence="21">
    <location>
        <position position="603"/>
    </location>
</feature>
<feature type="modified residue" description="Phosphoserine" evidence="20">
    <location>
        <position position="677"/>
    </location>
</feature>
<feature type="splice variant" id="VSP_002775" description="In isoform 1a and isoform 1d." evidence="16">
    <location>
        <position position="201"/>
    </location>
</feature>
<feature type="splice variant" id="VSP_002776" description="In isoform 1b and isoform 1e." evidence="17">
    <original>S</original>
    <variation>SPRQSWRKS</variation>
    <location>
        <position position="201"/>
    </location>
</feature>
<feature type="splice variant" id="VSP_002777" description="In isoform 1a and isoform 1b." evidence="16 17">
    <location>
        <begin position="219"/>
        <end position="249"/>
    </location>
</feature>
<feature type="splice variant" id="VSP_002778" description="In isoform 3a." evidence="18">
    <location>
        <begin position="410"/>
        <end position="415"/>
    </location>
</feature>
<feature type="splice variant" id="VSP_002779" description="In isoform 3a." evidence="18">
    <location>
        <begin position="505"/>
        <end position="513"/>
    </location>
</feature>
<feature type="mutagenesis site" description="Results in inhibition of JNK binding." evidence="8">
    <original>R</original>
    <variation>G</variation>
    <location>
        <position position="205"/>
    </location>
</feature>
<feature type="mutagenesis site" description="Results in inhibition of JNK binding." evidence="8">
    <original>P</original>
    <variation>G</variation>
    <location>
        <position position="206"/>
    </location>
</feature>
<feature type="mutagenesis site" description="Results in inhibition of JNK binding." evidence="8">
    <original>T</original>
    <variation>G</variation>
    <location>
        <position position="207"/>
    </location>
</feature>
<feature type="mutagenesis site" description="Results in inhibition of JNK binding." evidence="8">
    <original>S</original>
    <variation>G</variation>
    <location>
        <position position="208"/>
    </location>
</feature>
<feature type="mutagenesis site" description="Results in inhibition of JNK binding." evidence="8">
    <original>L</original>
    <variation>G</variation>
    <location>
        <position position="209"/>
    </location>
</feature>
<feature type="mutagenesis site" description="Results in loss of phosphorylation of MAPK8IP3; when associated with A-276 and A-287. Does not effect binding of components of the JNK pathway." evidence="8">
    <original>T</original>
    <variation>A</variation>
    <location>
        <position position="266"/>
    </location>
</feature>
<feature type="mutagenesis site" description="Results in loss of phosphorylation of MAPK8IP3; when associated with A-266 and A-287. Does not effect binding of components of the JNK pathway." evidence="8">
    <original>T</original>
    <variation>A</variation>
    <location>
        <position position="276"/>
    </location>
</feature>
<feature type="mutagenesis site" description="Results in loss of phosphorylation of MAPK8IP3; when associated with A-266 and A-287. Does not effect binding of components of the JNK pathway." evidence="8">
    <original>T</original>
    <variation>A</variation>
    <location>
        <position position="287"/>
    </location>
</feature>
<feature type="sequence conflict" description="In Ref. 4; AAG36931." evidence="18" ref="4">
    <original>K</original>
    <variation>R</variation>
    <location>
        <position position="312"/>
    </location>
</feature>
<feature type="sequence conflict" description="In Ref. 3; AAF26843." evidence="18" ref="3">
    <original>F</original>
    <variation>L</variation>
    <location>
        <position position="376"/>
    </location>
</feature>
<feature type="sequence conflict" description="In Ref. 4; AAG36931." evidence="18" ref="4">
    <original>E</original>
    <variation>K</variation>
    <location>
        <position position="561"/>
    </location>
</feature>
<feature type="sequence conflict" description="In Ref. 4; AAG36931." evidence="18" ref="4">
    <original>A</original>
    <variation>V</variation>
    <location>
        <position position="1272"/>
    </location>
</feature>
<feature type="sequence conflict" description="In Ref. 4; AAG36931." evidence="18" ref="4">
    <original>A</original>
    <variation>D</variation>
    <location>
        <position position="1322"/>
    </location>
</feature>
<feature type="sequence conflict" description="In Ref. 4; AAG36931." evidence="18" ref="4">
    <original>S</original>
    <variation>T</variation>
    <location>
        <position position="1325"/>
    </location>
</feature>
<feature type="helix" evidence="22">
    <location>
        <begin position="417"/>
        <end position="474"/>
    </location>
</feature>
<evidence type="ECO:0000250" key="1">
    <source>
        <dbReference type="UniProtKB" id="E9PSK7"/>
    </source>
</evidence>
<evidence type="ECO:0000250" key="2">
    <source>
        <dbReference type="UniProtKB" id="Q9UPT6"/>
    </source>
</evidence>
<evidence type="ECO:0000255" key="3"/>
<evidence type="ECO:0000255" key="4">
    <source>
        <dbReference type="PROSITE-ProRule" id="PRU01112"/>
    </source>
</evidence>
<evidence type="ECO:0000255" key="5">
    <source>
        <dbReference type="PROSITE-ProRule" id="PRU01113"/>
    </source>
</evidence>
<evidence type="ECO:0000256" key="6">
    <source>
        <dbReference type="SAM" id="MobiDB-lite"/>
    </source>
</evidence>
<evidence type="ECO:0000269" key="7">
    <source>
    </source>
</evidence>
<evidence type="ECO:0000269" key="8">
    <source>
    </source>
</evidence>
<evidence type="ECO:0000269" key="9">
    <source>
    </source>
</evidence>
<evidence type="ECO:0000269" key="10">
    <source>
    </source>
</evidence>
<evidence type="ECO:0000269" key="11">
    <source>
    </source>
</evidence>
<evidence type="ECO:0000269" key="12">
    <source>
    </source>
</evidence>
<evidence type="ECO:0000269" key="13">
    <source>
    </source>
</evidence>
<evidence type="ECO:0000269" key="14">
    <source>
    </source>
</evidence>
<evidence type="ECO:0000269" key="15">
    <source>
    </source>
</evidence>
<evidence type="ECO:0000303" key="16">
    <source>
    </source>
</evidence>
<evidence type="ECO:0000303" key="17">
    <source>
    </source>
</evidence>
<evidence type="ECO:0000305" key="18"/>
<evidence type="ECO:0000312" key="19">
    <source>
        <dbReference type="EMBL" id="BAB16675.1"/>
    </source>
</evidence>
<evidence type="ECO:0007744" key="20">
    <source>
    </source>
</evidence>
<evidence type="ECO:0007744" key="21">
    <source>
    </source>
</evidence>
<evidence type="ECO:0007829" key="22">
    <source>
        <dbReference type="PDB" id="6EJN"/>
    </source>
</evidence>
<sequence>MMEIQMDEGGGVVVYQDDYCSGSVMSERVSGLAGSIYREFERLIHCYDEEVVKELMPLVVNVLENLDSVLSENQEHEVELELLREDNEQLLTQYEREKALRKQAEEKFIEFEDALEQEKKELQIQVEHYEFQTRQLELKAKNYADQISRLEERESEMKKEYNALHQRHTEMIQTYVEHIERSKMQQVGGSGQTESSLPGRSRKERPTSLNVFPLADGMVRAQMGGKLVPAGDHWHLSDLGQLQSSSSYQCPNDEMSESGQSSAAATPSTTGTKSNTPTSSVPSAAVTPLNESLQPLGDYVSVTKNNKQAREKRNSRNMEVQVTQEMRNVSIGMGSSDEWSDVQDIIDSTPELDVCPETRLERTGSSPTQGIVNKAFGINTDSLYHELSTAGSEVIGDVDEGADLLGEFSVRDDFFGMGKEVGNLLLENSQLLETKNALNVVKNDLIAKVDQLSGEQEVLKGELEAAKQAKVKLENRIKELEEELKRVKSEAVTARREPREEVEDVSSYLCTELDKIPMAQRRRFTRVEMARVLMERNQYKERLMELQEAVRWTEMIRASREHPSVQEKKKSTIWQFFSRLFSSSSSPPPAKRSYPSVNIHYKSPTAAGFSQRRSHALCQISAGSRPLEFFPDDDCTSSARREQKREQYRQVREHVRNDDGRLQACGWSLPAKYKQLSPNGGQEDTRMKNVPVPVYCRPLVEKDPSTKLWCAAGVNLSGWKPHEEDSSNGPKPVPGRDPLTCDREGEGEPKSTHPSPEKKKAKETPEADATSSRVWILTSTLTTSKVVIIDANQPGTIVDQFTVCNAHVLCISSIPAASDSDYPPGEMFLDSDVNPEDSGADGVLAGITLVGCATRCNVPRSNCSSRGDTPVLDKGQGDVATTANGKVNPSQSTEEATEATEVPDPGPSESEATTVRPGPLTEHVFTDPAPTPSSSTQPASENGSESNGTIVQPQVEPSGELSTTTSSAAPTMWLGAQNGWLYVHSAVANWKKCLHSIKLKDSVLSLVHVKGRVLVALADGTLAIFHRGEDGQWDLSNYHLMDLGHPHHSIRCMAVVNDRVWCGYKNKVHVIQPKTMQIEKSFDAHPRRESQVRQLAWIGDGVWVSIRLDSTLRLYHAHTHQHLQDVDIEPYVSKMLGTGKLGFSFVRITALLIAGNRLWVGTGNGVVISIPLTETVVLHRGQLLGLRANKTSPTSGEGTRPGGIIHVYGDDSSDKAASSFIPYCSMAQAQLCFHGHRDAVKFFVSVPGNVLATLNGSVLDSPSEGPGPAAPAADAEGQKLKNALVLSGGEGYIDFRIGDGEDDETEECAGDVNQTKPSLSKAERSHIIVWQVSYTPE</sequence>
<name>JIP3_MOUSE</name>
<comment type="function">
    <text evidence="7 8 13 14 15">The JNK-interacting protein (JIP) group of scaffold proteins selectively mediates JNK signaling by aggregating specific components of the MAPK cascade to form a functional JNK signaling module. May function as a regulator of vesicle transport, through interactions with the JNK-signaling components and motor proteins (PubMed:10523642, PubMed:10629060). Promotes neuronal axon elongation in a kinesin- and JNK-dependent manner (PubMed:23576431, PubMed:25944905, PubMed:28259553). Activates cofilin at axon tips via local activation of JNK, thereby regulating filopodial dynamics and enhancing axon elongation (PubMed:23576431, PubMed:25944905, PubMed:28259553). Its binding to kinesin heavy chains (KHC), promotes kinesin-1 motility along microtubules and is essential for axon elongation and regeneration (PubMed:23576431, PubMed:25944905, PubMed:28259553). Regulates cortical neuronal migration by mediating NTRK2/TRKB anterograde axonal transport during brain development (PubMed:23576431, PubMed:25944905, PubMed:28259553). Acts as an adapter that bridges the interaction between NTRK2/TRKB and KLC1 and drives NTRK2/TRKB axonal but not dendritic anterograde transport, which is essential for subsequent BDNF-triggered signaling and filopodia formation (PubMed:23576431, PubMed:25944905, PubMed:28259553).</text>
</comment>
<comment type="subunit">
    <text evidence="1 2 7 8 10 11 12">Forms homo- or heterooligomeric complexes. The central region of MAPK8IP3 interacts with the C-terminal of MAPK8IP2 but not MAPK8IP1. Binds specific components of the JNK signaling pathway namely MAPK8/JNK1, MAPK9/JNK2 and MAPK10/JNK3 to the N-terminal region, MAP2K4/MKK4 and MAP2K7/MKK7 to the central region and MAP3K11 to the C-terminal region. Binds the TPR motif-containing C-terminal of kinesin light chain, KLC1. Pre-assembled MAPK8IP1 scaffolding complexes are then transported as a cargo of kinesin, to the required subcellular location (PubMed:10523642, PubMed:10629060, PubMed:11106729, PubMed:11238452). Interacts with ROCK1 and this interaction is enhanced by ultraviolet-B (UVB) radiation. Interacts with SH3RF2 (By similarity). Interacts with NTRK2/TRKB and NTRK3/TRKC (PubMed:21775604).</text>
</comment>
<comment type="interaction">
    <interactant intactId="EBI-301496">
        <id>Q9ESN9</id>
    </interactant>
    <interactant intactId="EBI-988682">
        <id>P62331</id>
        <label>Arf6</label>
    </interactant>
    <organismsDiffer>false</organismsDiffer>
    <experiments>8</experiments>
</comment>
<comment type="interaction">
    <interactant intactId="EBI-301496">
        <id>Q9ESN9</id>
    </interactant>
    <interactant intactId="EBI-2506834">
        <id>P28738</id>
        <label>Kif5c</label>
    </interactant>
    <organismsDiffer>false</organismsDiffer>
    <experiments>8</experiments>
</comment>
<comment type="interaction">
    <interactant intactId="EBI-301496">
        <id>Q9ESN9</id>
    </interactant>
    <interactant intactId="EBI-301550">
        <id>O88447</id>
        <label>Klc1</label>
    </interactant>
    <organismsDiffer>false</organismsDiffer>
    <experiments>10</experiments>
</comment>
<comment type="interaction">
    <interactant intactId="EBI-301496">
        <id>Q9ESN9</id>
    </interactant>
    <interactant intactId="EBI-301558">
        <id>O88448</id>
        <label>Klc2</label>
    </interactant>
    <organismsDiffer>false</organismsDiffer>
    <experiments>5</experiments>
</comment>
<comment type="interaction">
    <interactant intactId="EBI-9549291">
        <id>Q9ESN9-2</id>
    </interactant>
    <interactant intactId="EBI-298860">
        <id>P31938</id>
        <label>Map2k1</label>
    </interactant>
    <organismsDiffer>false</organismsDiffer>
    <experiments>3</experiments>
</comment>
<comment type="interaction">
    <interactant intactId="EBI-9549291">
        <id>Q9ESN9-2</id>
    </interactant>
    <interactant intactId="EBI-447934">
        <id>P47809</id>
        <label>Map2k4</label>
    </interactant>
    <organismsDiffer>false</organismsDiffer>
    <experiments>3</experiments>
</comment>
<comment type="interaction">
    <interactant intactId="EBI-9549291">
        <id>Q9ESN9-2</id>
    </interactant>
    <interactant intactId="EBI-447913">
        <id>P53349</id>
        <label>Map3k1</label>
    </interactant>
    <organismsDiffer>false</organismsDiffer>
    <experiments>3</experiments>
</comment>
<comment type="interaction">
    <interactant intactId="EBI-9549291">
        <id>Q9ESN9-2</id>
    </interactant>
    <interactant intactId="EBI-400741">
        <id>Q61831</id>
        <label>Mapk10</label>
    </interactant>
    <organismsDiffer>false</organismsDiffer>
    <experiments>4</experiments>
</comment>
<comment type="interaction">
    <interactant intactId="EBI-9549291">
        <id>Q9ESN9-2</id>
    </interactant>
    <interactant intactId="EBI-365996">
        <id>P04049</id>
        <label>RAF1</label>
    </interactant>
    <organismsDiffer>true</organismsDiffer>
    <experiments>2</experiments>
</comment>
<comment type="subcellular location">
    <subcellularLocation>
        <location evidence="8">Cytoplasm</location>
    </subcellularLocation>
    <subcellularLocation>
        <location evidence="10">Golgi apparatus</location>
    </subcellularLocation>
    <subcellularLocation>
        <location evidence="10">Cytoplasmic vesicle</location>
    </subcellularLocation>
    <subcellularLocation>
        <location evidence="8">Cell projection</location>
        <location evidence="8">Growth cone</location>
    </subcellularLocation>
    <subcellularLocation>
        <location evidence="14">Cell projection</location>
        <location evidence="14">Axon</location>
    </subcellularLocation>
    <subcellularLocation>
        <location evidence="1">Cell projection</location>
        <location evidence="1">Dendrite</location>
    </subcellularLocation>
    <subcellularLocation>
        <location evidence="1">Cytoplasm</location>
        <location evidence="1">Perinuclear region</location>
    </subcellularLocation>
    <text evidence="1 8 10">Localized in the soma and growth cones of differentiated neurites and the Golgi and vesicles of the early secretory compartment of epithelial cells (PubMed:10629060, PubMed:11106729). KIF5A/B/C-mediated transportation to axon tips is essential for its function in enhancing neuronal axon elongation (By similarity).</text>
</comment>
<comment type="alternative products">
    <event type="alternative splicing"/>
    <isoform>
        <id>Q9ESN9-1</id>
        <name>1c</name>
        <name>3b</name>
        <sequence type="displayed"/>
    </isoform>
    <isoform>
        <id>Q9ESN9-2</id>
        <name>1a</name>
        <sequence type="described" ref="VSP_002775 VSP_002777"/>
    </isoform>
    <isoform>
        <id>Q9ESN9-3</id>
        <name>1b</name>
        <sequence type="described" ref="VSP_002776 VSP_002777"/>
    </isoform>
    <isoform>
        <id>Q9ESN9-4</id>
        <name>1d</name>
        <sequence type="described" ref="VSP_002775"/>
    </isoform>
    <isoform>
        <id>Q9ESN9-5</id>
        <name>3a</name>
        <sequence type="described" ref="VSP_002778 VSP_002779"/>
    </isoform>
    <isoform>
        <id>Q9ESN9-6</id>
        <name>1e</name>
        <sequence type="described" ref="VSP_002776"/>
    </isoform>
</comment>
<comment type="tissue specificity">
    <text evidence="8 9">Highly expressed throughout many regions of the brain and at lower levels in the heart, liver, lung, testes and kidney. All isoforms have been identified in the brain, isoform 1a is also expressed in the spleen and lung.</text>
</comment>
<comment type="developmental stage">
    <text evidence="15">Highly expressed in the brain of embryonic mice. Expression levels gradually increase from 10 dpc to postnatal day 10 (P10) (at protein level).</text>
</comment>
<comment type="induction">
    <text evidence="8">Expressed in neurites 5 days following initiation of nerve growth factor induced differentiation. NGF withdrawal results in the down-regulation of MAPK8IP3 protein by caspase-mediated cleavage.</text>
</comment>
<comment type="PTM">
    <text evidence="2">Phosphorylation by ROCK1 is crucial for the recruitment of JNK.</text>
</comment>
<comment type="disruption phenotype">
    <text evidence="15">The cerebral cortex in the embryonic brain is a little thinner and the distribution of neurons is more disordered than that found in the wild-type littermates.</text>
</comment>
<comment type="similarity">
    <text evidence="18">Belongs to the JIP scaffold family.</text>
</comment>
<comment type="sequence caution" evidence="18">
    <conflict type="erroneous initiation">
        <sequence resource="EMBL-CDS" id="AAG36931"/>
    </conflict>
</comment>
<protein>
    <recommendedName>
        <fullName>C-Jun-amino-terminal kinase-interacting protein 3</fullName>
        <shortName>JIP-3</shortName>
        <shortName>JNK-interacting protein 3</shortName>
    </recommendedName>
    <alternativeName>
        <fullName>JNK MAP kinase scaffold protein 3</fullName>
    </alternativeName>
    <alternativeName>
        <fullName>JNK/SAPK-associated protein 1</fullName>
        <shortName>JSAP1</shortName>
    </alternativeName>
    <alternativeName>
        <fullName>Mitogen-activated protein kinase 8-interacting protein 3</fullName>
    </alternativeName>
    <alternativeName>
        <fullName>Sunday driver 2</fullName>
    </alternativeName>
</protein>
<gene>
    <name type="primary">Mapk8ip3</name>
    <name type="synonym">Jip3</name>
    <name type="synonym">Jsap1</name>
    <name type="synonym">Syd2</name>
</gene>
<reference evidence="18" key="1">
    <citation type="journal article" date="1999" name="Mol. Cell. Biol.">
        <title>JSAP1, a novel jun N-terminal protein kinase (JNK)-binding protein that functions as a scaffold factor in the JNK signaling pathway.</title>
        <authorList>
            <person name="Ito M."/>
            <person name="Yoshioka K."/>
            <person name="Akechi M."/>
            <person name="Yamashita S."/>
            <person name="Takamatsu N."/>
            <person name="Sugiyama K."/>
            <person name="Hibi M."/>
            <person name="Nakabeppu Y."/>
            <person name="Shiba T."/>
            <person name="Yamamoto K."/>
        </authorList>
    </citation>
    <scope>NUCLEOTIDE SEQUENCE [MRNA] (ISOFORM 1A)</scope>
    <scope>FUNCTION</scope>
    <scope>PHOSPHORYLATION</scope>
    <scope>INTERACTION WITH MAPK8; MAPK9; MAPK10; MAP2K4 AND MAP3K1</scope>
    <source>
        <tissue>Brain</tissue>
    </source>
</reference>
<reference evidence="18" key="2">
    <citation type="journal article" date="2000" name="Gene">
        <title>Isoforms of JSAP1 scaffold protein generated through alternative splicing.</title>
        <authorList>
            <person name="Ito M."/>
            <person name="Akechi M."/>
            <person name="Hirose R."/>
            <person name="Ichimura M."/>
            <person name="Takamatsu N."/>
            <person name="Xu P."/>
            <person name="Nakabeppu Y."/>
            <person name="Tadayoshi S."/>
            <person name="Yamamoto K."/>
            <person name="Yoshioka K."/>
        </authorList>
    </citation>
    <scope>NUCLEOTIDE SEQUENCE [GENOMIC DNA] (ISOFORMS 1A; 1B; 1C; 1D AND 1E)</scope>
    <scope>TISSUE SPECIFICITY</scope>
    <source>
        <tissue>Brain</tissue>
    </source>
</reference>
<reference evidence="18" key="3">
    <citation type="journal article" date="2000" name="Mol. Cell. Biol.">
        <title>Interaction of a mitogen-activated protein kinase signaling module with the neuronal protein JIP3.</title>
        <authorList>
            <person name="Kelkar N."/>
            <person name="Gupta S."/>
            <person name="Dickens M."/>
            <person name="Davis R.J."/>
        </authorList>
    </citation>
    <scope>NUCLEOTIDE SEQUENCE (ISOFORMS 1C AND 3A)</scope>
    <scope>FUNCTION</scope>
    <scope>INDUCTION</scope>
    <scope>TISSUE SPECIFICITY</scope>
    <scope>SUBCELLULAR LOCATION</scope>
    <scope>PHOSPHORYLATION AT THR-266; THR-276 AND THR-287</scope>
    <scope>MUTAGENESIS OF ARG-205; PRO-206; THR-207; SER-208; LEU-209; THR-266; THR-276 AND THR-287</scope>
    <scope>INTERACTION WITH MAPK8IP2; MAPK8; MAPK9; MAPK10; MAP2K7 AND MAP3K11</scope>
    <source>
        <strain>C57BL/6J</strain>
        <tissue>Brain</tissue>
        <tissue>Heart</tissue>
    </source>
</reference>
<reference evidence="18" key="4">
    <citation type="journal article" date="2000" name="Cell">
        <title>Kinesin-dependent axonal transport is mediated by the Sunday Driver (SYD) protein.</title>
        <authorList>
            <person name="Bowman A.B."/>
            <person name="Kamal A."/>
            <person name="Ritchings B.W."/>
            <person name="Philp A.V."/>
            <person name="McGrail M."/>
            <person name="Gindhart J.G."/>
            <person name="Goldstein L.S.B."/>
        </authorList>
    </citation>
    <scope>NUCLEOTIDE SEQUENCE [MRNA] (ISOFORM 1C)</scope>
    <scope>SUBCELLULAR LOCATION</scope>
    <scope>INTERACTION WITH KLC1</scope>
    <source>
        <strain>C57BL/6J</strain>
        <tissue>Brain</tissue>
    </source>
</reference>
<reference key="5">
    <citation type="journal article" date="2004" name="Genome Res.">
        <title>The status, quality, and expansion of the NIH full-length cDNA project: the Mammalian Gene Collection (MGC).</title>
        <authorList>
            <consortium name="The MGC Project Team"/>
        </authorList>
    </citation>
    <scope>NUCLEOTIDE SEQUENCE [LARGE SCALE MRNA] (ISOFORM 1B)</scope>
    <scope>NUCLEOTIDE SEQUENCE [LARGE SCALE MRNA] OF 1240-1337 (ISOFORM 1C)</scope>
    <source>
        <strain>C57BL/6J</strain>
        <tissue>Brain</tissue>
    </source>
</reference>
<reference evidence="18" key="6">
    <citation type="journal article" date="2001" name="J. Cell Biol.">
        <title>Cargo of kinesin identified as JIP scaffolding proteins and associated signaling molecules.</title>
        <authorList>
            <person name="Verhey K.J."/>
            <person name="Meyer D."/>
            <person name="Deehan R."/>
            <person name="Blenis J."/>
            <person name="Schnapp B.J."/>
            <person name="Rapoport T.A."/>
            <person name="Margolis B."/>
        </authorList>
    </citation>
    <scope>INTERACTION WITH KLC</scope>
    <source>
        <tissue>Brain</tissue>
    </source>
</reference>
<reference key="7">
    <citation type="journal article" date="2006" name="Mol. Cell. Proteomics">
        <title>Comprehensive identification of phosphorylation sites in postsynaptic density preparations.</title>
        <authorList>
            <person name="Trinidad J.C."/>
            <person name="Specht C.G."/>
            <person name="Thalhammer A."/>
            <person name="Schoepfer R."/>
            <person name="Burlingame A.L."/>
        </authorList>
    </citation>
    <scope>PHOSPHORYLATION [LARGE SCALE ANALYSIS] AT SER-677</scope>
    <scope>IDENTIFICATION BY MASS SPECTROMETRY [LARGE SCALE ANALYSIS]</scope>
    <source>
        <tissue>Brain</tissue>
    </source>
</reference>
<reference key="8">
    <citation type="journal article" date="2010" name="Cell">
        <title>A tissue-specific atlas of mouse protein phosphorylation and expression.</title>
        <authorList>
            <person name="Huttlin E.L."/>
            <person name="Jedrychowski M.P."/>
            <person name="Elias J.E."/>
            <person name="Goswami T."/>
            <person name="Rad R."/>
            <person name="Beausoleil S.A."/>
            <person name="Villen J."/>
            <person name="Haas W."/>
            <person name="Sowa M.E."/>
            <person name="Gygi S.P."/>
        </authorList>
    </citation>
    <scope>PHOSPHORYLATION [LARGE SCALE ANALYSIS] AT THR-287; SER-366 AND SER-603</scope>
    <scope>IDENTIFICATION BY MASS SPECTROMETRY [LARGE SCALE ANALYSIS]</scope>
    <source>
        <tissue>Brain</tissue>
        <tissue>Brown adipose tissue</tissue>
        <tissue>Heart</tissue>
        <tissue>Kidney</tissue>
        <tissue>Lung</tissue>
        <tissue>Spleen</tissue>
        <tissue>Testis</tissue>
    </source>
</reference>
<reference key="9">
    <citation type="journal article" date="2011" name="J. Neurosci.">
        <title>JIP3 mediates TrkB axonal anterograde transport and enhances BDNF signaling by directly bridging TrkB with kinesin-1.</title>
        <authorList>
            <person name="Huang S.H."/>
            <person name="Duan S."/>
            <person name="Sun T."/>
            <person name="Wang J."/>
            <person name="Zhao L."/>
            <person name="Geng Z."/>
            <person name="Yan J."/>
            <person name="Sun H.J."/>
            <person name="Chen Z.Y."/>
        </authorList>
    </citation>
    <scope>INTERACTION WITH NTRK2 AND NTRK3</scope>
</reference>
<reference key="10">
    <citation type="journal article" date="2013" name="J. Biol. Chem.">
        <title>c-Jun NH2-terminal kinase (JNK)-interacting protein-3 (JIP3) regulates neuronal axon elongation in a kinesin- and JNK-dependent manner.</title>
        <authorList>
            <person name="Sun T."/>
            <person name="Yu N."/>
            <person name="Zhai L.K."/>
            <person name="Li N."/>
            <person name="Zhang C."/>
            <person name="Zhou L."/>
            <person name="Huang Z."/>
            <person name="Jiang X.Y."/>
            <person name="Shen Y."/>
            <person name="Chen Z.Y."/>
        </authorList>
    </citation>
    <scope>FUNCTION</scope>
    <scope>DOMAINS KBD; JBD AND LZ</scope>
</reference>
<reference key="11">
    <citation type="journal article" date="2015" name="J. Biol. Chem.">
        <title>JIP3 activates kinesin-1 motility to promote axon elongation.</title>
        <authorList>
            <person name="Watt D."/>
            <person name="Dixit R."/>
            <person name="Cavalli V."/>
        </authorList>
    </citation>
    <scope>FUNCTION</scope>
    <scope>SUBCELLULAR LOCATION</scope>
</reference>
<reference key="12">
    <citation type="journal article" date="2017" name="Biochem. Biophys. Res. Commun.">
        <title>JIP3 regulates neuronal radial migration by mediating TrkB axonal anterograde transport in the developing cerebral cortex.</title>
        <authorList>
            <person name="Ma H."/>
            <person name="Yu H."/>
            <person name="Li T."/>
            <person name="Zhao Y."/>
            <person name="Hou M."/>
            <person name="Chen Z."/>
            <person name="Wang Y."/>
            <person name="Sun T."/>
        </authorList>
    </citation>
    <scope>FUNCTION</scope>
    <scope>DISRUPTION PHENOTYPE</scope>
    <scope>DEVELOPMENTAL STAGE</scope>
</reference>
<organism evidence="19">
    <name type="scientific">Mus musculus</name>
    <name type="common">Mouse</name>
    <dbReference type="NCBI Taxonomy" id="10090"/>
    <lineage>
        <taxon>Eukaryota</taxon>
        <taxon>Metazoa</taxon>
        <taxon>Chordata</taxon>
        <taxon>Craniata</taxon>
        <taxon>Vertebrata</taxon>
        <taxon>Euteleostomi</taxon>
        <taxon>Mammalia</taxon>
        <taxon>Eutheria</taxon>
        <taxon>Euarchontoglires</taxon>
        <taxon>Glires</taxon>
        <taxon>Rodentia</taxon>
        <taxon>Myomorpha</taxon>
        <taxon>Muroidea</taxon>
        <taxon>Muridae</taxon>
        <taxon>Murinae</taxon>
        <taxon>Mus</taxon>
        <taxon>Mus</taxon>
    </lineage>
</organism>
<accession>Q9ESN9</accession>
<accession>Q5D062</accession>
<accession>Q99KU7</accession>
<accession>Q9EQD8</accession>
<accession>Q9ESN7</accession>
<accession>Q9ESN8</accession>
<accession>Q9ESP0</accession>
<accession>Q9JLH2</accession>
<accession>Q9JLH3</accession>
<accession>Q9R0U7</accession>
<dbReference type="EMBL" id="AB005662">
    <property type="protein sequence ID" value="BAA85874.1"/>
    <property type="molecule type" value="mRNA"/>
</dbReference>
<dbReference type="EMBL" id="AB043124">
    <property type="protein sequence ID" value="BAB16675.1"/>
    <property type="molecule type" value="mRNA"/>
</dbReference>
<dbReference type="EMBL" id="AB043125">
    <property type="protein sequence ID" value="BAB16676.1"/>
    <property type="molecule type" value="mRNA"/>
</dbReference>
<dbReference type="EMBL" id="AB043123">
    <property type="protein sequence ID" value="BAB16674.1"/>
    <property type="molecule type" value="mRNA"/>
</dbReference>
<dbReference type="EMBL" id="AB043129">
    <property type="protein sequence ID" value="BAB16685.1"/>
    <property type="molecule type" value="Genomic_DNA"/>
</dbReference>
<dbReference type="EMBL" id="AF178637">
    <property type="protein sequence ID" value="AAF26843.1"/>
    <property type="molecule type" value="mRNA"/>
</dbReference>
<dbReference type="EMBL" id="AF178636">
    <property type="protein sequence ID" value="AAF26842.1"/>
    <property type="molecule type" value="mRNA"/>
</dbReference>
<dbReference type="EMBL" id="AF262046">
    <property type="protein sequence ID" value="AAG36931.1"/>
    <property type="status" value="ALT_INIT"/>
    <property type="molecule type" value="mRNA"/>
</dbReference>
<dbReference type="EMBL" id="BC004003">
    <property type="protein sequence ID" value="AAH04003.1"/>
    <property type="molecule type" value="mRNA"/>
</dbReference>
<dbReference type="EMBL" id="BC060603">
    <property type="protein sequence ID" value="AAH60603.1"/>
    <property type="molecule type" value="mRNA"/>
</dbReference>
<dbReference type="CCDS" id="CCDS37498.1">
    <molecule id="Q9ESN9-1"/>
</dbReference>
<dbReference type="CCDS" id="CCDS50024.1">
    <molecule id="Q9ESN9-4"/>
</dbReference>
<dbReference type="CCDS" id="CCDS50025.1">
    <molecule id="Q9ESN9-5"/>
</dbReference>
<dbReference type="CCDS" id="CCDS50026.1">
    <molecule id="Q9ESN9-2"/>
</dbReference>
<dbReference type="CCDS" id="CCDS50029.1">
    <molecule id="Q9ESN9-3"/>
</dbReference>
<dbReference type="RefSeq" id="NP_001156919.1">
    <molecule id="Q9ESN9-4"/>
    <property type="nucleotide sequence ID" value="NM_001163447.1"/>
</dbReference>
<dbReference type="RefSeq" id="NP_001156920.1">
    <molecule id="Q9ESN9-5"/>
    <property type="nucleotide sequence ID" value="NM_001163448.1"/>
</dbReference>
<dbReference type="RefSeq" id="NP_001156921.1">
    <molecule id="Q9ESN9-3"/>
    <property type="nucleotide sequence ID" value="NM_001163449.1"/>
</dbReference>
<dbReference type="RefSeq" id="NP_001156923.1">
    <molecule id="Q9ESN9-2"/>
    <property type="nucleotide sequence ID" value="NM_001163451.1"/>
</dbReference>
<dbReference type="RefSeq" id="NP_038959.2">
    <molecule id="Q9ESN9-1"/>
    <property type="nucleotide sequence ID" value="NM_013931.4"/>
</dbReference>
<dbReference type="PDB" id="6EJN">
    <property type="method" value="X-ray"/>
    <property type="resolution" value="3.20 A"/>
    <property type="chains" value="C/D=417-486"/>
</dbReference>
<dbReference type="PDBsum" id="6EJN"/>
<dbReference type="SMR" id="Q9ESN9"/>
<dbReference type="BioGRID" id="206033">
    <property type="interactions" value="16"/>
</dbReference>
<dbReference type="FunCoup" id="Q9ESN9">
    <property type="interactions" value="2838"/>
</dbReference>
<dbReference type="IntAct" id="Q9ESN9">
    <property type="interactions" value="18"/>
</dbReference>
<dbReference type="MINT" id="Q9ESN9"/>
<dbReference type="STRING" id="10090.ENSMUSP00000085683"/>
<dbReference type="GlyConnect" id="2216">
    <property type="glycosylation" value="1 N-Linked glycan (1 site)"/>
</dbReference>
<dbReference type="GlyCosmos" id="Q9ESN9">
    <property type="glycosylation" value="1 site, 1 glycan"/>
</dbReference>
<dbReference type="GlyGen" id="Q9ESN9">
    <property type="glycosylation" value="3 sites"/>
</dbReference>
<dbReference type="iPTMnet" id="Q9ESN9"/>
<dbReference type="PhosphoSitePlus" id="Q9ESN9"/>
<dbReference type="SwissPalm" id="Q9ESN9"/>
<dbReference type="jPOST" id="Q9ESN9"/>
<dbReference type="PaxDb" id="10090-ENSMUSP00000085683"/>
<dbReference type="PeptideAtlas" id="Q9ESN9"/>
<dbReference type="ProteomicsDB" id="269028">
    <molecule id="Q9ESN9-1"/>
</dbReference>
<dbReference type="ProteomicsDB" id="269029">
    <molecule id="Q9ESN9-2"/>
</dbReference>
<dbReference type="ProteomicsDB" id="269030">
    <molecule id="Q9ESN9-3"/>
</dbReference>
<dbReference type="ProteomicsDB" id="269031">
    <molecule id="Q9ESN9-4"/>
</dbReference>
<dbReference type="ProteomicsDB" id="269032">
    <molecule id="Q9ESN9-5"/>
</dbReference>
<dbReference type="ProteomicsDB" id="269033">
    <molecule id="Q9ESN9-6"/>
</dbReference>
<dbReference type="Pumba" id="Q9ESN9"/>
<dbReference type="Antibodypedia" id="3958">
    <property type="antibodies" value="158 antibodies from 32 providers"/>
</dbReference>
<dbReference type="DNASU" id="30957"/>
<dbReference type="Ensembl" id="ENSMUST00000088345.12">
    <molecule id="Q9ESN9-1"/>
    <property type="protein sequence ID" value="ENSMUSP00000085683.6"/>
    <property type="gene ID" value="ENSMUSG00000024163.19"/>
</dbReference>
<dbReference type="Ensembl" id="ENSMUST00000115228.9">
    <molecule id="Q9ESN9-5"/>
    <property type="protein sequence ID" value="ENSMUSP00000110883.3"/>
    <property type="gene ID" value="ENSMUSG00000024163.19"/>
</dbReference>
<dbReference type="Ensembl" id="ENSMUST00000117509.8">
    <molecule id="Q9ESN9-3"/>
    <property type="protein sequence ID" value="ENSMUSP00000112712.2"/>
    <property type="gene ID" value="ENSMUSG00000024163.19"/>
</dbReference>
<dbReference type="Ensembl" id="ENSMUST00000119115.8">
    <molecule id="Q9ESN9-2"/>
    <property type="protein sequence ID" value="ENSMUSP00000112955.2"/>
    <property type="gene ID" value="ENSMUSG00000024163.19"/>
</dbReference>
<dbReference type="Ensembl" id="ENSMUST00000120035.8">
    <molecule id="Q9ESN9-4"/>
    <property type="protein sequence ID" value="ENSMUSP00000114084.2"/>
    <property type="gene ID" value="ENSMUSG00000024163.19"/>
</dbReference>
<dbReference type="Ensembl" id="ENSMUST00000146923.8">
    <molecule id="Q9ESN9-1"/>
    <property type="protein sequence ID" value="ENSMUSP00000114802.2"/>
    <property type="gene ID" value="ENSMUSG00000024163.19"/>
</dbReference>
<dbReference type="GeneID" id="30957"/>
<dbReference type="KEGG" id="mmu:30957"/>
<dbReference type="UCSC" id="uc008aza.2">
    <molecule id="Q9ESN9-5"/>
    <property type="organism name" value="mouse"/>
</dbReference>
<dbReference type="UCSC" id="uc008azb.2">
    <molecule id="Q9ESN9-1"/>
    <property type="organism name" value="mouse"/>
</dbReference>
<dbReference type="UCSC" id="uc008azc.2">
    <molecule id="Q9ESN9-3"/>
    <property type="organism name" value="mouse"/>
</dbReference>
<dbReference type="UCSC" id="uc008aze.2">
    <molecule id="Q9ESN9-2"/>
    <property type="organism name" value="mouse"/>
</dbReference>
<dbReference type="UCSC" id="uc008azf.2">
    <molecule id="Q9ESN9-4"/>
    <property type="organism name" value="mouse"/>
</dbReference>
<dbReference type="AGR" id="MGI:1353598"/>
<dbReference type="CTD" id="23162"/>
<dbReference type="MGI" id="MGI:1353598">
    <property type="gene designation" value="Mapk8ip3"/>
</dbReference>
<dbReference type="VEuPathDB" id="HostDB:ENSMUSG00000024163"/>
<dbReference type="eggNOG" id="KOG2077">
    <property type="taxonomic scope" value="Eukaryota"/>
</dbReference>
<dbReference type="GeneTree" id="ENSGT00940000153496"/>
<dbReference type="InParanoid" id="Q9ESN9"/>
<dbReference type="OrthoDB" id="45132at9989"/>
<dbReference type="PhylomeDB" id="Q9ESN9"/>
<dbReference type="TreeFam" id="TF313096"/>
<dbReference type="BioGRID-ORCS" id="30957">
    <property type="hits" value="3 hits in 80 CRISPR screens"/>
</dbReference>
<dbReference type="CD-CODE" id="CE726F99">
    <property type="entry name" value="Postsynaptic density"/>
</dbReference>
<dbReference type="ChiTaRS" id="Mapk8ip3">
    <property type="organism name" value="mouse"/>
</dbReference>
<dbReference type="PRO" id="PR:Q9ESN9"/>
<dbReference type="Proteomes" id="UP000000589">
    <property type="component" value="Chromosome 17"/>
</dbReference>
<dbReference type="RNAct" id="Q9ESN9">
    <property type="molecule type" value="protein"/>
</dbReference>
<dbReference type="Bgee" id="ENSMUSG00000024163">
    <property type="expression patterns" value="Expressed in dentate gyrus of hippocampal formation granule cell and 258 other cell types or tissues"/>
</dbReference>
<dbReference type="ExpressionAtlas" id="Q9ESN9">
    <property type="expression patterns" value="baseline and differential"/>
</dbReference>
<dbReference type="GO" id="GO:0030673">
    <property type="term" value="C:axolemma"/>
    <property type="evidence" value="ECO:0000314"/>
    <property type="project" value="MGI"/>
</dbReference>
<dbReference type="GO" id="GO:0030424">
    <property type="term" value="C:axon"/>
    <property type="evidence" value="ECO:0000314"/>
    <property type="project" value="UniProtKB"/>
</dbReference>
<dbReference type="GO" id="GO:1904115">
    <property type="term" value="C:axon cytoplasm"/>
    <property type="evidence" value="ECO:0007669"/>
    <property type="project" value="GOC"/>
</dbReference>
<dbReference type="GO" id="GO:0044297">
    <property type="term" value="C:cell body"/>
    <property type="evidence" value="ECO:0000250"/>
    <property type="project" value="UniProtKB"/>
</dbReference>
<dbReference type="GO" id="GO:0005737">
    <property type="term" value="C:cytoplasm"/>
    <property type="evidence" value="ECO:0000314"/>
    <property type="project" value="BHF-UCL"/>
</dbReference>
<dbReference type="GO" id="GO:0031410">
    <property type="term" value="C:cytoplasmic vesicle"/>
    <property type="evidence" value="ECO:0007669"/>
    <property type="project" value="UniProtKB-KW"/>
</dbReference>
<dbReference type="GO" id="GO:0030425">
    <property type="term" value="C:dendrite"/>
    <property type="evidence" value="ECO:0000314"/>
    <property type="project" value="MGI"/>
</dbReference>
<dbReference type="GO" id="GO:0000139">
    <property type="term" value="C:Golgi membrane"/>
    <property type="evidence" value="ECO:0000314"/>
    <property type="project" value="UniProtKB"/>
</dbReference>
<dbReference type="GO" id="GO:0030426">
    <property type="term" value="C:growth cone"/>
    <property type="evidence" value="ECO:0007669"/>
    <property type="project" value="UniProtKB-SubCell"/>
</dbReference>
<dbReference type="GO" id="GO:0048471">
    <property type="term" value="C:perinuclear region of cytoplasm"/>
    <property type="evidence" value="ECO:0000250"/>
    <property type="project" value="UniProtKB"/>
</dbReference>
<dbReference type="GO" id="GO:0005886">
    <property type="term" value="C:plasma membrane"/>
    <property type="evidence" value="ECO:0000314"/>
    <property type="project" value="MGI"/>
</dbReference>
<dbReference type="GO" id="GO:0005790">
    <property type="term" value="C:smooth endoplasmic reticulum"/>
    <property type="evidence" value="ECO:0000314"/>
    <property type="project" value="MGI"/>
</dbReference>
<dbReference type="GO" id="GO:0008432">
    <property type="term" value="F:JUN kinase binding"/>
    <property type="evidence" value="ECO:0000353"/>
    <property type="project" value="BHF-UCL"/>
</dbReference>
<dbReference type="GO" id="GO:0019894">
    <property type="term" value="F:kinesin binding"/>
    <property type="evidence" value="ECO:0000314"/>
    <property type="project" value="UniProtKB"/>
</dbReference>
<dbReference type="GO" id="GO:0005078">
    <property type="term" value="F:MAP-kinase scaffold activity"/>
    <property type="evidence" value="ECO:0000314"/>
    <property type="project" value="BHF-UCL"/>
</dbReference>
<dbReference type="GO" id="GO:0031434">
    <property type="term" value="F:mitogen-activated protein kinase kinase binding"/>
    <property type="evidence" value="ECO:0000353"/>
    <property type="project" value="BHF-UCL"/>
</dbReference>
<dbReference type="GO" id="GO:0031435">
    <property type="term" value="F:mitogen-activated protein kinase kinase kinase binding"/>
    <property type="evidence" value="ECO:0000353"/>
    <property type="project" value="BHF-UCL"/>
</dbReference>
<dbReference type="GO" id="GO:0099641">
    <property type="term" value="P:anterograde axonal protein transport"/>
    <property type="evidence" value="ECO:0000315"/>
    <property type="project" value="UniProtKB"/>
</dbReference>
<dbReference type="GO" id="GO:0061564">
    <property type="term" value="P:axon development"/>
    <property type="evidence" value="ECO:0000315"/>
    <property type="project" value="UniProtKB"/>
</dbReference>
<dbReference type="GO" id="GO:0007411">
    <property type="term" value="P:axon guidance"/>
    <property type="evidence" value="ECO:0000315"/>
    <property type="project" value="MGI"/>
</dbReference>
<dbReference type="GO" id="GO:0031103">
    <property type="term" value="P:axon regeneration"/>
    <property type="evidence" value="ECO:0000250"/>
    <property type="project" value="UniProtKB"/>
</dbReference>
<dbReference type="GO" id="GO:0030900">
    <property type="term" value="P:forebrain development"/>
    <property type="evidence" value="ECO:0000315"/>
    <property type="project" value="MGI"/>
</dbReference>
<dbReference type="GO" id="GO:0001701">
    <property type="term" value="P:in utero embryonic development"/>
    <property type="evidence" value="ECO:0000315"/>
    <property type="project" value="MGI"/>
</dbReference>
<dbReference type="GO" id="GO:0007254">
    <property type="term" value="P:JNK cascade"/>
    <property type="evidence" value="ECO:0000314"/>
    <property type="project" value="BHF-UCL"/>
</dbReference>
<dbReference type="GO" id="GO:0048286">
    <property type="term" value="P:lung alveolus development"/>
    <property type="evidence" value="ECO:0000315"/>
    <property type="project" value="MGI"/>
</dbReference>
<dbReference type="GO" id="GO:0060425">
    <property type="term" value="P:lung morphogenesis"/>
    <property type="evidence" value="ECO:0000315"/>
    <property type="project" value="MGI"/>
</dbReference>
<dbReference type="GO" id="GO:2001224">
    <property type="term" value="P:positive regulation of neuron migration"/>
    <property type="evidence" value="ECO:0000315"/>
    <property type="project" value="UniProtKB"/>
</dbReference>
<dbReference type="GO" id="GO:0009791">
    <property type="term" value="P:post-embryonic development"/>
    <property type="evidence" value="ECO:0000315"/>
    <property type="project" value="MGI"/>
</dbReference>
<dbReference type="GO" id="GO:0008104">
    <property type="term" value="P:protein localization"/>
    <property type="evidence" value="ECO:0000315"/>
    <property type="project" value="MGI"/>
</dbReference>
<dbReference type="GO" id="GO:0010468">
    <property type="term" value="P:regulation of gene expression"/>
    <property type="evidence" value="ECO:0000314"/>
    <property type="project" value="MGI"/>
</dbReference>
<dbReference type="GO" id="GO:0046328">
    <property type="term" value="P:regulation of JNK cascade"/>
    <property type="evidence" value="ECO:0000314"/>
    <property type="project" value="UniProtKB"/>
</dbReference>
<dbReference type="GO" id="GO:0007585">
    <property type="term" value="P:respiratory gaseous exchange by respiratory system"/>
    <property type="evidence" value="ECO:0000315"/>
    <property type="project" value="MGI"/>
</dbReference>
<dbReference type="GO" id="GO:0016192">
    <property type="term" value="P:vesicle-mediated transport"/>
    <property type="evidence" value="ECO:0000314"/>
    <property type="project" value="UniProtKB"/>
</dbReference>
<dbReference type="FunFam" id="1.20.58.1770:FF:000001">
    <property type="entry name" value="C-Jun-amino-terminal kinase-interacting protein 3 isoform X1"/>
    <property type="match status" value="1"/>
</dbReference>
<dbReference type="FunFam" id="1.20.5.1000:FF:000001">
    <property type="entry name" value="C-Jun-amino-terminal kinase-interacting protein 3 isoform X2"/>
    <property type="match status" value="1"/>
</dbReference>
<dbReference type="FunFam" id="2.130.10.10:FF:000334">
    <property type="entry name" value="C-Jun-amino-terminal kinase-interacting protein 3 isoform X6"/>
    <property type="match status" value="1"/>
</dbReference>
<dbReference type="Gene3D" id="1.20.58.1770">
    <property type="match status" value="1"/>
</dbReference>
<dbReference type="Gene3D" id="1.20.5.1000">
    <property type="entry name" value="arf6 gtpase in complex with a specific effector, jip4"/>
    <property type="match status" value="1"/>
</dbReference>
<dbReference type="Gene3D" id="2.130.10.10">
    <property type="entry name" value="YVTN repeat-like/Quinoprotein amine dehydrogenase"/>
    <property type="match status" value="1"/>
</dbReference>
<dbReference type="InterPro" id="IPR039911">
    <property type="entry name" value="JIP3/JIP4"/>
</dbReference>
<dbReference type="InterPro" id="IPR032486">
    <property type="entry name" value="JIP_LZII"/>
</dbReference>
<dbReference type="InterPro" id="IPR034743">
    <property type="entry name" value="RH1"/>
</dbReference>
<dbReference type="InterPro" id="IPR034744">
    <property type="entry name" value="RH2"/>
</dbReference>
<dbReference type="InterPro" id="IPR015943">
    <property type="entry name" value="WD40/YVTN_repeat-like_dom_sf"/>
</dbReference>
<dbReference type="InterPro" id="IPR036322">
    <property type="entry name" value="WD40_repeat_dom_sf"/>
</dbReference>
<dbReference type="PANTHER" id="PTHR13886:SF3">
    <property type="entry name" value="C-JUN-AMINO-TERMINAL KINASE-INTERACTING PROTEIN 3"/>
    <property type="match status" value="1"/>
</dbReference>
<dbReference type="PANTHER" id="PTHR13886">
    <property type="entry name" value="JNK/SAPK-ASSOCIATED PROTEIN"/>
    <property type="match status" value="1"/>
</dbReference>
<dbReference type="Pfam" id="PF16471">
    <property type="entry name" value="JIP_LZII"/>
    <property type="match status" value="1"/>
</dbReference>
<dbReference type="Pfam" id="PF09744">
    <property type="entry name" value="RH1"/>
    <property type="match status" value="1"/>
</dbReference>
<dbReference type="Pfam" id="PF19056">
    <property type="entry name" value="WD40_2"/>
    <property type="match status" value="1"/>
</dbReference>
<dbReference type="SUPFAM" id="SSF50978">
    <property type="entry name" value="WD40 repeat-like"/>
    <property type="match status" value="1"/>
</dbReference>
<dbReference type="PROSITE" id="PS51776">
    <property type="entry name" value="RH1"/>
    <property type="match status" value="1"/>
</dbReference>
<dbReference type="PROSITE" id="PS51777">
    <property type="entry name" value="RH2"/>
    <property type="match status" value="1"/>
</dbReference>
<keyword id="KW-0002">3D-structure</keyword>
<keyword id="KW-0025">Alternative splicing</keyword>
<keyword id="KW-0966">Cell projection</keyword>
<keyword id="KW-0175">Coiled coil</keyword>
<keyword id="KW-0963">Cytoplasm</keyword>
<keyword id="KW-0968">Cytoplasmic vesicle</keyword>
<keyword id="KW-0333">Golgi apparatus</keyword>
<keyword id="KW-0597">Phosphoprotein</keyword>
<keyword id="KW-1185">Reference proteome</keyword>